<keyword id="KW-0067">ATP-binding</keyword>
<keyword id="KW-0963">Cytoplasm</keyword>
<keyword id="KW-0227">DNA damage</keyword>
<keyword id="KW-0233">DNA recombination</keyword>
<keyword id="KW-0234">DNA repair</keyword>
<keyword id="KW-0238">DNA-binding</keyword>
<keyword id="KW-0547">Nucleotide-binding</keyword>
<keyword id="KW-0742">SOS response</keyword>
<reference key="1">
    <citation type="journal article" date="2007" name="J. Bacteriol.">
        <title>The complete genome sequence of Bacillus thuringiensis Al Hakam.</title>
        <authorList>
            <person name="Challacombe J.F."/>
            <person name="Altherr M.R."/>
            <person name="Xie G."/>
            <person name="Bhotika S.S."/>
            <person name="Brown N."/>
            <person name="Bruce D."/>
            <person name="Campbell C.S."/>
            <person name="Campbell M.L."/>
            <person name="Chen J."/>
            <person name="Chertkov O."/>
            <person name="Cleland C."/>
            <person name="Dimitrijevic M."/>
            <person name="Doggett N.A."/>
            <person name="Fawcett J.J."/>
            <person name="Glavina T."/>
            <person name="Goodwin L.A."/>
            <person name="Green L.D."/>
            <person name="Han C.S."/>
            <person name="Hill K.K."/>
            <person name="Hitchcock P."/>
            <person name="Jackson P.J."/>
            <person name="Keim P."/>
            <person name="Kewalramani A.R."/>
            <person name="Longmire J."/>
            <person name="Lucas S."/>
            <person name="Malfatti S."/>
            <person name="Martinez D."/>
            <person name="McMurry K."/>
            <person name="Meincke L.J."/>
            <person name="Misra M."/>
            <person name="Moseman B.L."/>
            <person name="Mundt M."/>
            <person name="Munk A.C."/>
            <person name="Okinaka R.T."/>
            <person name="Parson-Quintana B."/>
            <person name="Reilly L.P."/>
            <person name="Richardson P."/>
            <person name="Robinson D.L."/>
            <person name="Saunders E."/>
            <person name="Tapia R."/>
            <person name="Tesmer J.G."/>
            <person name="Thayer N."/>
            <person name="Thompson L.S."/>
            <person name="Tice H."/>
            <person name="Ticknor L.O."/>
            <person name="Wills P.L."/>
            <person name="Gilna P."/>
            <person name="Brettin T.S."/>
        </authorList>
    </citation>
    <scope>NUCLEOTIDE SEQUENCE [LARGE SCALE GENOMIC DNA]</scope>
    <source>
        <strain>Al Hakam</strain>
    </source>
</reference>
<organism>
    <name type="scientific">Bacillus thuringiensis (strain Al Hakam)</name>
    <dbReference type="NCBI Taxonomy" id="412694"/>
    <lineage>
        <taxon>Bacteria</taxon>
        <taxon>Bacillati</taxon>
        <taxon>Bacillota</taxon>
        <taxon>Bacilli</taxon>
        <taxon>Bacillales</taxon>
        <taxon>Bacillaceae</taxon>
        <taxon>Bacillus</taxon>
        <taxon>Bacillus cereus group</taxon>
    </lineage>
</organism>
<feature type="chain" id="PRO_1000047889" description="Protein RecA">
    <location>
        <begin position="1"/>
        <end position="343"/>
    </location>
</feature>
<feature type="binding site" evidence="1">
    <location>
        <begin position="64"/>
        <end position="71"/>
    </location>
    <ligand>
        <name>ATP</name>
        <dbReference type="ChEBI" id="CHEBI:30616"/>
    </ligand>
</feature>
<comment type="function">
    <text evidence="1">Can catalyze the hydrolysis of ATP in the presence of single-stranded DNA, the ATP-dependent uptake of single-stranded DNA by duplex DNA, and the ATP-dependent hybridization of homologous single-stranded DNAs. It interacts with LexA causing its activation and leading to its autocatalytic cleavage.</text>
</comment>
<comment type="subcellular location">
    <subcellularLocation>
        <location evidence="1">Cytoplasm</location>
    </subcellularLocation>
</comment>
<comment type="similarity">
    <text evidence="1">Belongs to the RecA family.</text>
</comment>
<name>RECA_BACAH</name>
<dbReference type="EMBL" id="CP000485">
    <property type="protein sequence ID" value="ABK86644.1"/>
    <property type="molecule type" value="Genomic_DNA"/>
</dbReference>
<dbReference type="RefSeq" id="WP_001283851.1">
    <property type="nucleotide sequence ID" value="NC_008600.1"/>
</dbReference>
<dbReference type="SMR" id="A0RHF1"/>
<dbReference type="KEGG" id="btl:BALH_3407"/>
<dbReference type="HOGENOM" id="CLU_040469_3_2_9"/>
<dbReference type="GO" id="GO:0005829">
    <property type="term" value="C:cytosol"/>
    <property type="evidence" value="ECO:0007669"/>
    <property type="project" value="TreeGrafter"/>
</dbReference>
<dbReference type="GO" id="GO:0005524">
    <property type="term" value="F:ATP binding"/>
    <property type="evidence" value="ECO:0007669"/>
    <property type="project" value="UniProtKB-UniRule"/>
</dbReference>
<dbReference type="GO" id="GO:0016887">
    <property type="term" value="F:ATP hydrolysis activity"/>
    <property type="evidence" value="ECO:0007669"/>
    <property type="project" value="InterPro"/>
</dbReference>
<dbReference type="GO" id="GO:0140664">
    <property type="term" value="F:ATP-dependent DNA damage sensor activity"/>
    <property type="evidence" value="ECO:0007669"/>
    <property type="project" value="InterPro"/>
</dbReference>
<dbReference type="GO" id="GO:0003684">
    <property type="term" value="F:damaged DNA binding"/>
    <property type="evidence" value="ECO:0007669"/>
    <property type="project" value="UniProtKB-UniRule"/>
</dbReference>
<dbReference type="GO" id="GO:0003697">
    <property type="term" value="F:single-stranded DNA binding"/>
    <property type="evidence" value="ECO:0007669"/>
    <property type="project" value="UniProtKB-UniRule"/>
</dbReference>
<dbReference type="GO" id="GO:0006310">
    <property type="term" value="P:DNA recombination"/>
    <property type="evidence" value="ECO:0007669"/>
    <property type="project" value="UniProtKB-UniRule"/>
</dbReference>
<dbReference type="GO" id="GO:0006281">
    <property type="term" value="P:DNA repair"/>
    <property type="evidence" value="ECO:0007669"/>
    <property type="project" value="UniProtKB-UniRule"/>
</dbReference>
<dbReference type="GO" id="GO:0009432">
    <property type="term" value="P:SOS response"/>
    <property type="evidence" value="ECO:0007669"/>
    <property type="project" value="UniProtKB-UniRule"/>
</dbReference>
<dbReference type="CDD" id="cd00983">
    <property type="entry name" value="RecA"/>
    <property type="match status" value="1"/>
</dbReference>
<dbReference type="FunFam" id="3.40.50.300:FF:000087">
    <property type="entry name" value="Recombinase RecA"/>
    <property type="match status" value="1"/>
</dbReference>
<dbReference type="Gene3D" id="3.40.50.300">
    <property type="entry name" value="P-loop containing nucleotide triphosphate hydrolases"/>
    <property type="match status" value="1"/>
</dbReference>
<dbReference type="HAMAP" id="MF_00268">
    <property type="entry name" value="RecA"/>
    <property type="match status" value="1"/>
</dbReference>
<dbReference type="InterPro" id="IPR003593">
    <property type="entry name" value="AAA+_ATPase"/>
</dbReference>
<dbReference type="InterPro" id="IPR013765">
    <property type="entry name" value="DNA_recomb/repair_RecA"/>
</dbReference>
<dbReference type="InterPro" id="IPR020584">
    <property type="entry name" value="DNA_recomb/repair_RecA_CS"/>
</dbReference>
<dbReference type="InterPro" id="IPR027417">
    <property type="entry name" value="P-loop_NTPase"/>
</dbReference>
<dbReference type="InterPro" id="IPR049261">
    <property type="entry name" value="RecA-like_C"/>
</dbReference>
<dbReference type="InterPro" id="IPR049428">
    <property type="entry name" value="RecA-like_N"/>
</dbReference>
<dbReference type="InterPro" id="IPR020588">
    <property type="entry name" value="RecA_ATP-bd"/>
</dbReference>
<dbReference type="InterPro" id="IPR023400">
    <property type="entry name" value="RecA_C_sf"/>
</dbReference>
<dbReference type="InterPro" id="IPR020587">
    <property type="entry name" value="RecA_monomer-monomer_interface"/>
</dbReference>
<dbReference type="NCBIfam" id="TIGR02012">
    <property type="entry name" value="tigrfam_recA"/>
    <property type="match status" value="1"/>
</dbReference>
<dbReference type="PANTHER" id="PTHR45900:SF1">
    <property type="entry name" value="MITOCHONDRIAL DNA REPAIR PROTEIN RECA HOMOLOG-RELATED"/>
    <property type="match status" value="1"/>
</dbReference>
<dbReference type="PANTHER" id="PTHR45900">
    <property type="entry name" value="RECA"/>
    <property type="match status" value="1"/>
</dbReference>
<dbReference type="Pfam" id="PF00154">
    <property type="entry name" value="RecA"/>
    <property type="match status" value="1"/>
</dbReference>
<dbReference type="Pfam" id="PF21096">
    <property type="entry name" value="RecA_C"/>
    <property type="match status" value="1"/>
</dbReference>
<dbReference type="PRINTS" id="PR00142">
    <property type="entry name" value="RECA"/>
</dbReference>
<dbReference type="SMART" id="SM00382">
    <property type="entry name" value="AAA"/>
    <property type="match status" value="1"/>
</dbReference>
<dbReference type="SUPFAM" id="SSF52540">
    <property type="entry name" value="P-loop containing nucleoside triphosphate hydrolases"/>
    <property type="match status" value="1"/>
</dbReference>
<dbReference type="SUPFAM" id="SSF54752">
    <property type="entry name" value="RecA protein, C-terminal domain"/>
    <property type="match status" value="1"/>
</dbReference>
<dbReference type="PROSITE" id="PS00321">
    <property type="entry name" value="RECA_1"/>
    <property type="match status" value="1"/>
</dbReference>
<dbReference type="PROSITE" id="PS50162">
    <property type="entry name" value="RECA_2"/>
    <property type="match status" value="1"/>
</dbReference>
<dbReference type="PROSITE" id="PS50163">
    <property type="entry name" value="RECA_3"/>
    <property type="match status" value="1"/>
</dbReference>
<accession>A0RHF1</accession>
<proteinExistence type="inferred from homology"/>
<sequence length="343" mass="37296">MSDRQAALDMALKQIEKQFGKGSIMKLGEQAERKVSTVSSGSLALDVALGVGGYPRGRIIEIYGPESSGKTTVSLHAIAEVQRQGGQAAFIDAEHAMDPVYAQKLGVNIDELLLSQPDTGEQGLEIAEALVRSGAVDIIVIDSVAALVPKAEIEGDMGDSHVGLQARLMSQALRKLSGAINKSKTIAIFINQIREKVGVMFGNPETTPGGRALKFYSTVRLEVRRAEQLKQGNDIVGNKTKVKVVKNKVAPPFRVAEVDIMYGEGISREGEILDMASELDIVQKSGAWYSYNEERLGQGRENSKQFLKENTDLREEIAFFIREHHGISEDSGAEGMEDPNLLD</sequence>
<evidence type="ECO:0000255" key="1">
    <source>
        <dbReference type="HAMAP-Rule" id="MF_00268"/>
    </source>
</evidence>
<protein>
    <recommendedName>
        <fullName evidence="1">Protein RecA</fullName>
    </recommendedName>
    <alternativeName>
        <fullName evidence="1">Recombinase A</fullName>
    </alternativeName>
</protein>
<gene>
    <name evidence="1" type="primary">recA</name>
    <name type="ordered locus">BALH_3407</name>
</gene>